<comment type="catalytic activity">
    <reaction evidence="1">
        <text>1-(5-phospho-beta-D-ribosyl)-ATP + H2O = 1-(5-phospho-beta-D-ribosyl)-5'-AMP + diphosphate + H(+)</text>
        <dbReference type="Rhea" id="RHEA:22828"/>
        <dbReference type="ChEBI" id="CHEBI:15377"/>
        <dbReference type="ChEBI" id="CHEBI:15378"/>
        <dbReference type="ChEBI" id="CHEBI:33019"/>
        <dbReference type="ChEBI" id="CHEBI:59457"/>
        <dbReference type="ChEBI" id="CHEBI:73183"/>
        <dbReference type="EC" id="3.6.1.31"/>
    </reaction>
</comment>
<comment type="pathway">
    <text evidence="1">Amino-acid biosynthesis; L-histidine biosynthesis; L-histidine from 5-phospho-alpha-D-ribose 1-diphosphate: step 2/9.</text>
</comment>
<comment type="subcellular location">
    <subcellularLocation>
        <location evidence="1">Cytoplasm</location>
    </subcellularLocation>
</comment>
<comment type="similarity">
    <text evidence="1">Belongs to the PRA-PH family.</text>
</comment>
<reference key="1">
    <citation type="submission" date="2007-03" db="EMBL/GenBank/DDBJ databases">
        <title>Complete sequence of chromosome 1 of Burkholderia vietnamiensis G4.</title>
        <authorList>
            <consortium name="US DOE Joint Genome Institute"/>
            <person name="Copeland A."/>
            <person name="Lucas S."/>
            <person name="Lapidus A."/>
            <person name="Barry K."/>
            <person name="Detter J.C."/>
            <person name="Glavina del Rio T."/>
            <person name="Hammon N."/>
            <person name="Israni S."/>
            <person name="Dalin E."/>
            <person name="Tice H."/>
            <person name="Pitluck S."/>
            <person name="Chain P."/>
            <person name="Malfatti S."/>
            <person name="Shin M."/>
            <person name="Vergez L."/>
            <person name="Schmutz J."/>
            <person name="Larimer F."/>
            <person name="Land M."/>
            <person name="Hauser L."/>
            <person name="Kyrpides N."/>
            <person name="Tiedje J."/>
            <person name="Richardson P."/>
        </authorList>
    </citation>
    <scope>NUCLEOTIDE SEQUENCE [LARGE SCALE GENOMIC DNA]</scope>
    <source>
        <strain>G4 / LMG 22486</strain>
    </source>
</reference>
<feature type="chain" id="PRO_1000063332" description="Phosphoribosyl-ATP pyrophosphatase">
    <location>
        <begin position="1"/>
        <end position="121"/>
    </location>
</feature>
<gene>
    <name evidence="1" type="primary">hisE</name>
    <name type="ordered locus">Bcep1808_0412</name>
</gene>
<accession>A4JAX1</accession>
<name>HIS2_BURVG</name>
<organism>
    <name type="scientific">Burkholderia vietnamiensis (strain G4 / LMG 22486)</name>
    <name type="common">Burkholderia cepacia (strain R1808)</name>
    <dbReference type="NCBI Taxonomy" id="269482"/>
    <lineage>
        <taxon>Bacteria</taxon>
        <taxon>Pseudomonadati</taxon>
        <taxon>Pseudomonadota</taxon>
        <taxon>Betaproteobacteria</taxon>
        <taxon>Burkholderiales</taxon>
        <taxon>Burkholderiaceae</taxon>
        <taxon>Burkholderia</taxon>
        <taxon>Burkholderia cepacia complex</taxon>
    </lineage>
</organism>
<evidence type="ECO:0000255" key="1">
    <source>
        <dbReference type="HAMAP-Rule" id="MF_01020"/>
    </source>
</evidence>
<proteinExistence type="inferred from homology"/>
<dbReference type="EC" id="3.6.1.31" evidence="1"/>
<dbReference type="EMBL" id="CP000614">
    <property type="protein sequence ID" value="ABO53424.1"/>
    <property type="molecule type" value="Genomic_DNA"/>
</dbReference>
<dbReference type="SMR" id="A4JAX1"/>
<dbReference type="KEGG" id="bvi:Bcep1808_0412"/>
<dbReference type="eggNOG" id="COG0140">
    <property type="taxonomic scope" value="Bacteria"/>
</dbReference>
<dbReference type="HOGENOM" id="CLU_123337_1_2_4"/>
<dbReference type="UniPathway" id="UPA00031">
    <property type="reaction ID" value="UER00007"/>
</dbReference>
<dbReference type="Proteomes" id="UP000002287">
    <property type="component" value="Chromosome 1"/>
</dbReference>
<dbReference type="GO" id="GO:0005737">
    <property type="term" value="C:cytoplasm"/>
    <property type="evidence" value="ECO:0007669"/>
    <property type="project" value="UniProtKB-SubCell"/>
</dbReference>
<dbReference type="GO" id="GO:0005524">
    <property type="term" value="F:ATP binding"/>
    <property type="evidence" value="ECO:0007669"/>
    <property type="project" value="UniProtKB-KW"/>
</dbReference>
<dbReference type="GO" id="GO:0004636">
    <property type="term" value="F:phosphoribosyl-ATP diphosphatase activity"/>
    <property type="evidence" value="ECO:0007669"/>
    <property type="project" value="UniProtKB-UniRule"/>
</dbReference>
<dbReference type="GO" id="GO:0000105">
    <property type="term" value="P:L-histidine biosynthetic process"/>
    <property type="evidence" value="ECO:0007669"/>
    <property type="project" value="UniProtKB-UniRule"/>
</dbReference>
<dbReference type="CDD" id="cd11534">
    <property type="entry name" value="NTP-PPase_HisIE_like"/>
    <property type="match status" value="1"/>
</dbReference>
<dbReference type="Gene3D" id="1.10.287.1080">
    <property type="entry name" value="MazG-like"/>
    <property type="match status" value="1"/>
</dbReference>
<dbReference type="HAMAP" id="MF_01020">
    <property type="entry name" value="HisE"/>
    <property type="match status" value="1"/>
</dbReference>
<dbReference type="InterPro" id="IPR008179">
    <property type="entry name" value="HisE"/>
</dbReference>
<dbReference type="InterPro" id="IPR021130">
    <property type="entry name" value="PRib-ATP_PPHydrolase-like"/>
</dbReference>
<dbReference type="NCBIfam" id="TIGR03188">
    <property type="entry name" value="histidine_hisI"/>
    <property type="match status" value="1"/>
</dbReference>
<dbReference type="NCBIfam" id="NF001611">
    <property type="entry name" value="PRK00400.1-3"/>
    <property type="match status" value="1"/>
</dbReference>
<dbReference type="PANTHER" id="PTHR42945">
    <property type="entry name" value="HISTIDINE BIOSYNTHESIS BIFUNCTIONAL PROTEIN"/>
    <property type="match status" value="1"/>
</dbReference>
<dbReference type="PANTHER" id="PTHR42945:SF9">
    <property type="entry name" value="HISTIDINE BIOSYNTHESIS BIFUNCTIONAL PROTEIN HISIE"/>
    <property type="match status" value="1"/>
</dbReference>
<dbReference type="Pfam" id="PF01503">
    <property type="entry name" value="PRA-PH"/>
    <property type="match status" value="1"/>
</dbReference>
<dbReference type="SUPFAM" id="SSF101386">
    <property type="entry name" value="all-alpha NTP pyrophosphatases"/>
    <property type="match status" value="1"/>
</dbReference>
<protein>
    <recommendedName>
        <fullName evidence="1">Phosphoribosyl-ATP pyrophosphatase</fullName>
        <shortName evidence="1">PRA-PH</shortName>
        <ecNumber evidence="1">3.6.1.31</ecNumber>
    </recommendedName>
</protein>
<sequence>MTQSTEDTLLRLAAVIDSRKGGDPEQSYVSRLFHKGDDAVLKKIGEEATEVVLAAKDVRQGGAPTALVGEVADLWFHCLVMLSHFDLSPADVIAELERREGLSGIEEKALRKRREREANGG</sequence>
<keyword id="KW-0028">Amino-acid biosynthesis</keyword>
<keyword id="KW-0067">ATP-binding</keyword>
<keyword id="KW-0963">Cytoplasm</keyword>
<keyword id="KW-0368">Histidine biosynthesis</keyword>
<keyword id="KW-0378">Hydrolase</keyword>
<keyword id="KW-0547">Nucleotide-binding</keyword>